<name>SYN_ACHLI</name>
<proteinExistence type="inferred from homology"/>
<comment type="catalytic activity">
    <reaction evidence="1">
        <text>tRNA(Asn) + L-asparagine + ATP = L-asparaginyl-tRNA(Asn) + AMP + diphosphate + H(+)</text>
        <dbReference type="Rhea" id="RHEA:11180"/>
        <dbReference type="Rhea" id="RHEA-COMP:9659"/>
        <dbReference type="Rhea" id="RHEA-COMP:9674"/>
        <dbReference type="ChEBI" id="CHEBI:15378"/>
        <dbReference type="ChEBI" id="CHEBI:30616"/>
        <dbReference type="ChEBI" id="CHEBI:33019"/>
        <dbReference type="ChEBI" id="CHEBI:58048"/>
        <dbReference type="ChEBI" id="CHEBI:78442"/>
        <dbReference type="ChEBI" id="CHEBI:78515"/>
        <dbReference type="ChEBI" id="CHEBI:456215"/>
        <dbReference type="EC" id="6.1.1.22"/>
    </reaction>
</comment>
<comment type="subunit">
    <text evidence="1">Homodimer.</text>
</comment>
<comment type="subcellular location">
    <subcellularLocation>
        <location evidence="1">Cytoplasm</location>
    </subcellularLocation>
</comment>
<comment type="similarity">
    <text evidence="1">Belongs to the class-II aminoacyl-tRNA synthetase family.</text>
</comment>
<feature type="chain" id="PRO_1000081843" description="Asparagine--tRNA ligase">
    <location>
        <begin position="1"/>
        <end position="463"/>
    </location>
</feature>
<gene>
    <name evidence="1" type="primary">asnS</name>
    <name type="ordered locus">ACL_1427</name>
</gene>
<reference key="1">
    <citation type="journal article" date="2011" name="J. Bacteriol.">
        <title>Complete genome and proteome of Acholeplasma laidlawii.</title>
        <authorList>
            <person name="Lazarev V.N."/>
            <person name="Levitskii S.A."/>
            <person name="Basovskii Y.I."/>
            <person name="Chukin M.M."/>
            <person name="Akopian T.A."/>
            <person name="Vereshchagin V.V."/>
            <person name="Kostrjukova E.S."/>
            <person name="Kovaleva G.Y."/>
            <person name="Kazanov M.D."/>
            <person name="Malko D.B."/>
            <person name="Vitreschak A.G."/>
            <person name="Sernova N.V."/>
            <person name="Gelfand M.S."/>
            <person name="Demina I.A."/>
            <person name="Serebryakova M.V."/>
            <person name="Galyamina M.A."/>
            <person name="Vtyurin N.N."/>
            <person name="Rogov S.I."/>
            <person name="Alexeev D.G."/>
            <person name="Ladygina V.G."/>
            <person name="Govorun V.M."/>
        </authorList>
    </citation>
    <scope>NUCLEOTIDE SEQUENCE [LARGE SCALE GENOMIC DNA]</scope>
    <source>
        <strain>PG-8A</strain>
    </source>
</reference>
<protein>
    <recommendedName>
        <fullName evidence="1">Asparagine--tRNA ligase</fullName>
        <ecNumber evidence="1">6.1.1.22</ecNumber>
    </recommendedName>
    <alternativeName>
        <fullName evidence="1">Asparaginyl-tRNA synthetase</fullName>
        <shortName evidence="1">AsnRS</shortName>
    </alternativeName>
</protein>
<sequence>MDLTIRTIYKDPARYAGQEVILKGWIRNHRDQKEFGFINLNDGSFFENIQVVYERATTKDFDAVTRLSVGASIEVIGTLVLTPDRSQPFEIKALEVRLIGDSGENYPIQPKRHTREFLREVAHLRPRTNLFSAVFRVRSIAAYAIHKFFQEQDFVYVHTPILTANDGEGAGAMFKVTTLDMNKPPRNEDSSIDYSKDFFGREANLTVTGQLEGEAYAHAFRNIYTFGPTFRAENSNTTTHASEFWMIEPEIAFADLNDNMELIERMVKYVTSYVLEHAKEEMAFFDKFVEKGLLTKLDNLLKSSFKRITHEEAINILLKSNHKFENQPKHGEDLAKEHERYLTEKAFHGPVFVKDWPKDIKAFYMRLNDDQKTVAAVDLLVPGSGELVGGSQREERLDVLLKRMEDMHVPVKDLDWYLDLRRYGGVQTSGFGLGFERYLIYVTGVENIRDVIPFPRTPKNILF</sequence>
<keyword id="KW-0030">Aminoacyl-tRNA synthetase</keyword>
<keyword id="KW-0067">ATP-binding</keyword>
<keyword id="KW-0963">Cytoplasm</keyword>
<keyword id="KW-0436">Ligase</keyword>
<keyword id="KW-0547">Nucleotide-binding</keyword>
<keyword id="KW-0648">Protein biosynthesis</keyword>
<keyword id="KW-1185">Reference proteome</keyword>
<accession>A9NE58</accession>
<organism>
    <name type="scientific">Acholeplasma laidlawii (strain PG-8A)</name>
    <dbReference type="NCBI Taxonomy" id="441768"/>
    <lineage>
        <taxon>Bacteria</taxon>
        <taxon>Bacillati</taxon>
        <taxon>Mycoplasmatota</taxon>
        <taxon>Mollicutes</taxon>
        <taxon>Acholeplasmatales</taxon>
        <taxon>Acholeplasmataceae</taxon>
        <taxon>Acholeplasma</taxon>
    </lineage>
</organism>
<evidence type="ECO:0000255" key="1">
    <source>
        <dbReference type="HAMAP-Rule" id="MF_00534"/>
    </source>
</evidence>
<dbReference type="EC" id="6.1.1.22" evidence="1"/>
<dbReference type="EMBL" id="CP000896">
    <property type="protein sequence ID" value="ABX82018.1"/>
    <property type="molecule type" value="Genomic_DNA"/>
</dbReference>
<dbReference type="RefSeq" id="WP_012243349.1">
    <property type="nucleotide sequence ID" value="NC_010163.1"/>
</dbReference>
<dbReference type="SMR" id="A9NE58"/>
<dbReference type="STRING" id="441768.ACL_1427"/>
<dbReference type="GeneID" id="41339555"/>
<dbReference type="KEGG" id="acl:ACL_1427"/>
<dbReference type="eggNOG" id="COG0017">
    <property type="taxonomic scope" value="Bacteria"/>
</dbReference>
<dbReference type="HOGENOM" id="CLU_004553_2_0_14"/>
<dbReference type="OrthoDB" id="9801152at2"/>
<dbReference type="Proteomes" id="UP000008558">
    <property type="component" value="Chromosome"/>
</dbReference>
<dbReference type="GO" id="GO:0005737">
    <property type="term" value="C:cytoplasm"/>
    <property type="evidence" value="ECO:0007669"/>
    <property type="project" value="UniProtKB-SubCell"/>
</dbReference>
<dbReference type="GO" id="GO:0004816">
    <property type="term" value="F:asparagine-tRNA ligase activity"/>
    <property type="evidence" value="ECO:0007669"/>
    <property type="project" value="UniProtKB-UniRule"/>
</dbReference>
<dbReference type="GO" id="GO:0005524">
    <property type="term" value="F:ATP binding"/>
    <property type="evidence" value="ECO:0007669"/>
    <property type="project" value="UniProtKB-UniRule"/>
</dbReference>
<dbReference type="GO" id="GO:0003676">
    <property type="term" value="F:nucleic acid binding"/>
    <property type="evidence" value="ECO:0007669"/>
    <property type="project" value="InterPro"/>
</dbReference>
<dbReference type="GO" id="GO:0006421">
    <property type="term" value="P:asparaginyl-tRNA aminoacylation"/>
    <property type="evidence" value="ECO:0007669"/>
    <property type="project" value="UniProtKB-UniRule"/>
</dbReference>
<dbReference type="CDD" id="cd00776">
    <property type="entry name" value="AsxRS_core"/>
    <property type="match status" value="1"/>
</dbReference>
<dbReference type="CDD" id="cd04318">
    <property type="entry name" value="EcAsnRS_like_N"/>
    <property type="match status" value="1"/>
</dbReference>
<dbReference type="FunFam" id="3.30.930.10:FF:000016">
    <property type="entry name" value="Asparagine--tRNA ligase"/>
    <property type="match status" value="1"/>
</dbReference>
<dbReference type="Gene3D" id="3.30.930.10">
    <property type="entry name" value="Bira Bifunctional Protein, Domain 2"/>
    <property type="match status" value="1"/>
</dbReference>
<dbReference type="Gene3D" id="2.40.50.140">
    <property type="entry name" value="Nucleic acid-binding proteins"/>
    <property type="match status" value="1"/>
</dbReference>
<dbReference type="HAMAP" id="MF_00534">
    <property type="entry name" value="Asn_tRNA_synth"/>
    <property type="match status" value="1"/>
</dbReference>
<dbReference type="InterPro" id="IPR004364">
    <property type="entry name" value="Aa-tRNA-synt_II"/>
</dbReference>
<dbReference type="InterPro" id="IPR006195">
    <property type="entry name" value="aa-tRNA-synth_II"/>
</dbReference>
<dbReference type="InterPro" id="IPR045864">
    <property type="entry name" value="aa-tRNA-synth_II/BPL/LPL"/>
</dbReference>
<dbReference type="InterPro" id="IPR004522">
    <property type="entry name" value="Asn-tRNA-ligase"/>
</dbReference>
<dbReference type="InterPro" id="IPR002312">
    <property type="entry name" value="Asp/Asn-tRNA-synth_IIb"/>
</dbReference>
<dbReference type="InterPro" id="IPR012340">
    <property type="entry name" value="NA-bd_OB-fold"/>
</dbReference>
<dbReference type="InterPro" id="IPR004365">
    <property type="entry name" value="NA-bd_OB_tRNA"/>
</dbReference>
<dbReference type="NCBIfam" id="TIGR00457">
    <property type="entry name" value="asnS"/>
    <property type="match status" value="1"/>
</dbReference>
<dbReference type="NCBIfam" id="NF003037">
    <property type="entry name" value="PRK03932.1"/>
    <property type="match status" value="1"/>
</dbReference>
<dbReference type="PANTHER" id="PTHR22594:SF34">
    <property type="entry name" value="ASPARAGINE--TRNA LIGASE, MITOCHONDRIAL-RELATED"/>
    <property type="match status" value="1"/>
</dbReference>
<dbReference type="PANTHER" id="PTHR22594">
    <property type="entry name" value="ASPARTYL/LYSYL-TRNA SYNTHETASE"/>
    <property type="match status" value="1"/>
</dbReference>
<dbReference type="Pfam" id="PF00152">
    <property type="entry name" value="tRNA-synt_2"/>
    <property type="match status" value="1"/>
</dbReference>
<dbReference type="Pfam" id="PF01336">
    <property type="entry name" value="tRNA_anti-codon"/>
    <property type="match status" value="1"/>
</dbReference>
<dbReference type="PRINTS" id="PR01042">
    <property type="entry name" value="TRNASYNTHASP"/>
</dbReference>
<dbReference type="SUPFAM" id="SSF55681">
    <property type="entry name" value="Class II aaRS and biotin synthetases"/>
    <property type="match status" value="1"/>
</dbReference>
<dbReference type="SUPFAM" id="SSF50249">
    <property type="entry name" value="Nucleic acid-binding proteins"/>
    <property type="match status" value="1"/>
</dbReference>
<dbReference type="PROSITE" id="PS50862">
    <property type="entry name" value="AA_TRNA_LIGASE_II"/>
    <property type="match status" value="1"/>
</dbReference>